<reference key="1">
    <citation type="journal article" date="1987" name="J. Biol. Chem.">
        <title>The genes of the Paracoccus denitrificans bc1 complex. Nucleotide sequence and homologies between bacterial and mitochondrial subunits.</title>
        <authorList>
            <person name="Kurowski B."/>
            <person name="Ludwig B."/>
        </authorList>
    </citation>
    <scope>NUCLEOTIDE SEQUENCE [GENOMIC DNA]</scope>
</reference>
<accession>P13627</accession>
<dbReference type="EMBL" id="M17522">
    <property type="protein sequence ID" value="AAA25573.1"/>
    <property type="molecule type" value="Genomic_DNA"/>
</dbReference>
<dbReference type="EMBL" id="X05799">
    <property type="protein sequence ID" value="CAA29245.1"/>
    <property type="molecule type" value="Genomic_DNA"/>
</dbReference>
<dbReference type="PIR" id="C29413">
    <property type="entry name" value="C29413"/>
</dbReference>
<dbReference type="RefSeq" id="WP_011748591.1">
    <property type="nucleotide sequence ID" value="NZ_JAOSHR010000005.1"/>
</dbReference>
<dbReference type="PDB" id="2YIU">
    <property type="method" value="X-ray"/>
    <property type="resolution" value="2.70 A"/>
    <property type="chains" value="B/E=25-38, B/E=202-450"/>
</dbReference>
<dbReference type="PDBsum" id="2YIU"/>
<dbReference type="SMR" id="P13627"/>
<dbReference type="TCDB" id="3.D.3.1.1">
    <property type="family name" value="the proton-translocating quinol:cytochrome c reductase (qcr) superfamily"/>
</dbReference>
<dbReference type="EvolutionaryTrace" id="P13627"/>
<dbReference type="GO" id="GO:0005886">
    <property type="term" value="C:plasma membrane"/>
    <property type="evidence" value="ECO:0007669"/>
    <property type="project" value="UniProtKB-SubCell"/>
</dbReference>
<dbReference type="GO" id="GO:0009055">
    <property type="term" value="F:electron transfer activity"/>
    <property type="evidence" value="ECO:0007669"/>
    <property type="project" value="InterPro"/>
</dbReference>
<dbReference type="GO" id="GO:0020037">
    <property type="term" value="F:heme binding"/>
    <property type="evidence" value="ECO:0007669"/>
    <property type="project" value="InterPro"/>
</dbReference>
<dbReference type="GO" id="GO:0046872">
    <property type="term" value="F:metal ion binding"/>
    <property type="evidence" value="ECO:0007669"/>
    <property type="project" value="UniProtKB-KW"/>
</dbReference>
<dbReference type="Gene3D" id="1.10.760.10">
    <property type="entry name" value="Cytochrome c-like domain"/>
    <property type="match status" value="1"/>
</dbReference>
<dbReference type="Gene3D" id="1.20.5.100">
    <property type="entry name" value="Cytochrome c1, transmembrane anchor, C-terminal"/>
    <property type="match status" value="1"/>
</dbReference>
<dbReference type="InterPro" id="IPR009056">
    <property type="entry name" value="Cyt_c-like_dom"/>
</dbReference>
<dbReference type="InterPro" id="IPR036909">
    <property type="entry name" value="Cyt_c-like_dom_sf"/>
</dbReference>
<dbReference type="InterPro" id="IPR002326">
    <property type="entry name" value="Cyt_c1"/>
</dbReference>
<dbReference type="PANTHER" id="PTHR10266">
    <property type="entry name" value="CYTOCHROME C1"/>
    <property type="match status" value="1"/>
</dbReference>
<dbReference type="PANTHER" id="PTHR10266:SF3">
    <property type="entry name" value="CYTOCHROME C1, HEME PROTEIN, MITOCHONDRIAL"/>
    <property type="match status" value="1"/>
</dbReference>
<dbReference type="Pfam" id="PF02167">
    <property type="entry name" value="Cytochrom_C1"/>
    <property type="match status" value="1"/>
</dbReference>
<dbReference type="PRINTS" id="PR00603">
    <property type="entry name" value="CYTOCHROMEC1"/>
</dbReference>
<dbReference type="SUPFAM" id="SSF46626">
    <property type="entry name" value="Cytochrome c"/>
    <property type="match status" value="1"/>
</dbReference>
<dbReference type="PROSITE" id="PS51007">
    <property type="entry name" value="CYTC"/>
    <property type="match status" value="1"/>
</dbReference>
<name>CY1_PARDE</name>
<proteinExistence type="evidence at protein level"/>
<feature type="signal peptide">
    <location>
        <begin position="1"/>
        <end position="21"/>
    </location>
</feature>
<feature type="chain" id="PRO_0000006560" description="Cytochrome c1">
    <location>
        <begin position="22"/>
        <end position="450"/>
    </location>
</feature>
<feature type="transmembrane region" description="Helical; Note=Anchors to the membrane" evidence="1">
    <location>
        <begin position="421"/>
        <end position="435"/>
    </location>
</feature>
<feature type="region of interest" description="Disordered" evidence="3">
    <location>
        <begin position="24"/>
        <end position="210"/>
    </location>
</feature>
<feature type="region of interest" description="Disordered" evidence="3">
    <location>
        <begin position="284"/>
        <end position="305"/>
    </location>
</feature>
<feature type="compositionally biased region" description="Low complexity" evidence="3">
    <location>
        <begin position="24"/>
        <end position="58"/>
    </location>
</feature>
<feature type="compositionally biased region" description="Acidic residues" evidence="3">
    <location>
        <begin position="59"/>
        <end position="77"/>
    </location>
</feature>
<feature type="compositionally biased region" description="Acidic residues" evidence="3">
    <location>
        <begin position="85"/>
        <end position="108"/>
    </location>
</feature>
<feature type="compositionally biased region" description="Acidic residues" evidence="3">
    <location>
        <begin position="118"/>
        <end position="194"/>
    </location>
</feature>
<feature type="binding site" description="covalent">
    <location>
        <position position="245"/>
    </location>
    <ligand>
        <name>heme c</name>
        <dbReference type="ChEBI" id="CHEBI:61717"/>
    </ligand>
</feature>
<feature type="binding site" description="covalent">
    <location>
        <position position="248"/>
    </location>
    <ligand>
        <name>heme c</name>
        <dbReference type="ChEBI" id="CHEBI:61717"/>
    </ligand>
</feature>
<feature type="binding site" description="axial binding residue">
    <location>
        <position position="249"/>
    </location>
    <ligand>
        <name>heme c</name>
        <dbReference type="ChEBI" id="CHEBI:61717"/>
    </ligand>
    <ligandPart>
        <name>Fe</name>
        <dbReference type="ChEBI" id="CHEBI:18248"/>
    </ligandPart>
</feature>
<feature type="binding site" description="axial binding residue" evidence="2">
    <location>
        <position position="373"/>
    </location>
    <ligand>
        <name>heme c</name>
        <dbReference type="ChEBI" id="CHEBI:61717"/>
    </ligand>
    <ligandPart>
        <name>Fe</name>
        <dbReference type="ChEBI" id="CHEBI:18248"/>
    </ligandPart>
</feature>
<feature type="helix" evidence="5">
    <location>
        <begin position="231"/>
        <end position="243"/>
    </location>
</feature>
<feature type="helix" evidence="5">
    <location>
        <begin position="245"/>
        <end position="247"/>
    </location>
</feature>
<feature type="helix" evidence="5">
    <location>
        <begin position="256"/>
        <end position="260"/>
    </location>
</feature>
<feature type="helix" evidence="5">
    <location>
        <begin position="269"/>
        <end position="276"/>
    </location>
</feature>
<feature type="strand" evidence="5">
    <location>
        <begin position="279"/>
        <end position="282"/>
    </location>
</feature>
<feature type="strand" evidence="5">
    <location>
        <begin position="284"/>
        <end position="291"/>
    </location>
</feature>
<feature type="helix" evidence="5">
    <location>
        <begin position="313"/>
        <end position="316"/>
    </location>
</feature>
<feature type="helix" evidence="5">
    <location>
        <begin position="337"/>
        <end position="345"/>
    </location>
</feature>
<feature type="strand" evidence="5">
    <location>
        <begin position="361"/>
        <end position="373"/>
    </location>
</feature>
<feature type="helix" evidence="5">
    <location>
        <begin position="392"/>
        <end position="407"/>
    </location>
</feature>
<feature type="helix" evidence="5">
    <location>
        <begin position="411"/>
        <end position="440"/>
    </location>
</feature>
<feature type="turn" evidence="5">
    <location>
        <begin position="441"/>
        <end position="443"/>
    </location>
</feature>
<sequence>MTLRNASLTAVAALTVALAGGAVAQDASTAPGTTAPAGSSYHTNEAAPAAADTAPAAEAADEPAAEEAEAGEAEVTEEPAATETPAEEPAADEPAATEEPDAEAEPAAEEAQATTEEAPAEEPAAEEPAAEEPAEEPAADAPAEEAAAEEAPAEPEAAAEEPAAEEPEATEEEAPAEEAAAEEAPAEEVVEDEAAADHGDAAAQEAGDSHAAAHIEDISFSFEGPFGKFDQHQLQRGLQVYTEVCSACHGLRYVPLRTLADEGGPQLPEDQVRAYAANFDITDPETEEDRPRVPTDHFPTVSGEGMGPDLSLMAKARAGFHGPYGTGLSQLFNGIGGPEYIHAVLTGYDGEEKEEAGAVLYHNAAFAGNWIQMAAPLSDDQVTYEDGTPATVDQMATDVAAFLMWTAEPKMMDRKQVGFVSVIFLIVLAALLYLTNKKLWQPIKHPRKPE</sequence>
<organism>
    <name type="scientific">Paracoccus denitrificans</name>
    <dbReference type="NCBI Taxonomy" id="266"/>
    <lineage>
        <taxon>Bacteria</taxon>
        <taxon>Pseudomonadati</taxon>
        <taxon>Pseudomonadota</taxon>
        <taxon>Alphaproteobacteria</taxon>
        <taxon>Rhodobacterales</taxon>
        <taxon>Paracoccaceae</taxon>
        <taxon>Paracoccus</taxon>
    </lineage>
</organism>
<comment type="function">
    <text>Component of the ubiquinol-cytochrome c reductase complex (complex III or cytochrome b-c1 complex), which is a respiratory chain that generates an electrochemical potential coupled to ATP synthesis. c1 functions as an electron donor to cytochrome c.</text>
</comment>
<comment type="subunit">
    <text>The main subunits of complex b-c1 are: cytochrome b, cytochrome c1 and the Rieske protein.</text>
</comment>
<comment type="subcellular location">
    <subcellularLocation>
        <location evidence="4">Cell membrane</location>
        <topology evidence="4">Single-pass membrane protein</topology>
    </subcellularLocation>
</comment>
<comment type="PTM">
    <text>Binds 1 heme c group covalently per subunit.</text>
</comment>
<keyword id="KW-0002">3D-structure</keyword>
<keyword id="KW-1003">Cell membrane</keyword>
<keyword id="KW-0249">Electron transport</keyword>
<keyword id="KW-0349">Heme</keyword>
<keyword id="KW-0408">Iron</keyword>
<keyword id="KW-0472">Membrane</keyword>
<keyword id="KW-0479">Metal-binding</keyword>
<keyword id="KW-0679">Respiratory chain</keyword>
<keyword id="KW-0732">Signal</keyword>
<keyword id="KW-0812">Transmembrane</keyword>
<keyword id="KW-1133">Transmembrane helix</keyword>
<keyword id="KW-0813">Transport</keyword>
<protein>
    <recommendedName>
        <fullName>Cytochrome c1</fullName>
    </recommendedName>
</protein>
<gene>
    <name type="primary">petC</name>
</gene>
<evidence type="ECO:0000255" key="1"/>
<evidence type="ECO:0000255" key="2">
    <source>
        <dbReference type="PROSITE-ProRule" id="PRU00433"/>
    </source>
</evidence>
<evidence type="ECO:0000256" key="3">
    <source>
        <dbReference type="SAM" id="MobiDB-lite"/>
    </source>
</evidence>
<evidence type="ECO:0000305" key="4"/>
<evidence type="ECO:0007829" key="5">
    <source>
        <dbReference type="PDB" id="2YIU"/>
    </source>
</evidence>